<proteinExistence type="inferred from homology"/>
<feature type="signal peptide" evidence="2">
    <location>
        <begin position="1"/>
        <end position="27"/>
    </location>
</feature>
<feature type="chain" id="PRO_5000252385" description="Probable periplasmic serine endoprotease DegP-like">
    <location>
        <begin position="28"/>
        <end position="477"/>
    </location>
</feature>
<feature type="domain" description="PDZ 1" evidence="3">
    <location>
        <begin position="264"/>
        <end position="355"/>
    </location>
</feature>
<feature type="domain" description="PDZ 2" evidence="3">
    <location>
        <begin position="361"/>
        <end position="466"/>
    </location>
</feature>
<feature type="active site" description="Charge relay system" evidence="1">
    <location>
        <position position="117"/>
    </location>
</feature>
<feature type="active site" description="Charge relay system" evidence="2">
    <location>
        <position position="147"/>
    </location>
</feature>
<feature type="active site" description="Charge relay system" evidence="1">
    <location>
        <position position="220"/>
    </location>
</feature>
<feature type="binding site" evidence="1">
    <location>
        <begin position="218"/>
        <end position="220"/>
    </location>
    <ligand>
        <name>substrate</name>
    </ligand>
</feature>
<feature type="binding site" evidence="1">
    <location>
        <begin position="275"/>
        <end position="279"/>
    </location>
    <ligand>
        <name>substrate</name>
    </ligand>
</feature>
<dbReference type="EC" id="3.4.21.107"/>
<dbReference type="EMBL" id="CP000712">
    <property type="protein sequence ID" value="ABQ80415.1"/>
    <property type="molecule type" value="Genomic_DNA"/>
</dbReference>
<dbReference type="SMR" id="A5W8F5"/>
<dbReference type="MEROPS" id="S01.453"/>
<dbReference type="KEGG" id="ppf:Pput_4291"/>
<dbReference type="eggNOG" id="COG0265">
    <property type="taxonomic scope" value="Bacteria"/>
</dbReference>
<dbReference type="HOGENOM" id="CLU_020120_1_0_6"/>
<dbReference type="GO" id="GO:0042597">
    <property type="term" value="C:periplasmic space"/>
    <property type="evidence" value="ECO:0007669"/>
    <property type="project" value="UniProtKB-SubCell"/>
</dbReference>
<dbReference type="GO" id="GO:0004252">
    <property type="term" value="F:serine-type endopeptidase activity"/>
    <property type="evidence" value="ECO:0007669"/>
    <property type="project" value="InterPro"/>
</dbReference>
<dbReference type="GO" id="GO:0006508">
    <property type="term" value="P:proteolysis"/>
    <property type="evidence" value="ECO:0007669"/>
    <property type="project" value="UniProtKB-KW"/>
</dbReference>
<dbReference type="CDD" id="cd10839">
    <property type="entry name" value="cpPDZ1_DegP-like"/>
    <property type="match status" value="1"/>
</dbReference>
<dbReference type="FunFam" id="2.40.10.120:FF:000007">
    <property type="entry name" value="Periplasmic serine endoprotease DegP-like"/>
    <property type="match status" value="1"/>
</dbReference>
<dbReference type="Gene3D" id="2.30.42.10">
    <property type="match status" value="2"/>
</dbReference>
<dbReference type="Gene3D" id="2.40.10.120">
    <property type="match status" value="1"/>
</dbReference>
<dbReference type="InterPro" id="IPR001478">
    <property type="entry name" value="PDZ"/>
</dbReference>
<dbReference type="InterPro" id="IPR036034">
    <property type="entry name" value="PDZ_sf"/>
</dbReference>
<dbReference type="InterPro" id="IPR011782">
    <property type="entry name" value="Pept_S1C_Do"/>
</dbReference>
<dbReference type="InterPro" id="IPR009003">
    <property type="entry name" value="Peptidase_S1_PA"/>
</dbReference>
<dbReference type="InterPro" id="IPR001940">
    <property type="entry name" value="Peptidase_S1C"/>
</dbReference>
<dbReference type="NCBIfam" id="TIGR02037">
    <property type="entry name" value="degP_htrA_DO"/>
    <property type="match status" value="1"/>
</dbReference>
<dbReference type="PANTHER" id="PTHR22939:SF130">
    <property type="entry name" value="PERIPLASMIC SERINE ENDOPROTEASE DEGP-LIKE-RELATED"/>
    <property type="match status" value="1"/>
</dbReference>
<dbReference type="PANTHER" id="PTHR22939">
    <property type="entry name" value="SERINE PROTEASE FAMILY S1C HTRA-RELATED"/>
    <property type="match status" value="1"/>
</dbReference>
<dbReference type="Pfam" id="PF13180">
    <property type="entry name" value="PDZ_2"/>
    <property type="match status" value="2"/>
</dbReference>
<dbReference type="Pfam" id="PF13365">
    <property type="entry name" value="Trypsin_2"/>
    <property type="match status" value="1"/>
</dbReference>
<dbReference type="PRINTS" id="PR00834">
    <property type="entry name" value="PROTEASES2C"/>
</dbReference>
<dbReference type="SMART" id="SM00228">
    <property type="entry name" value="PDZ"/>
    <property type="match status" value="2"/>
</dbReference>
<dbReference type="SUPFAM" id="SSF50156">
    <property type="entry name" value="PDZ domain-like"/>
    <property type="match status" value="2"/>
</dbReference>
<dbReference type="SUPFAM" id="SSF50494">
    <property type="entry name" value="Trypsin-like serine proteases"/>
    <property type="match status" value="1"/>
</dbReference>
<dbReference type="PROSITE" id="PS50106">
    <property type="entry name" value="PDZ"/>
    <property type="match status" value="2"/>
</dbReference>
<name>DEGPL_PSEP1</name>
<accession>A5W8F5</accession>
<organism>
    <name type="scientific">Pseudomonas putida (strain ATCC 700007 / DSM 6899 / JCM 31910 / BCRC 17059 / LMG 24140 / F1)</name>
    <dbReference type="NCBI Taxonomy" id="351746"/>
    <lineage>
        <taxon>Bacteria</taxon>
        <taxon>Pseudomonadati</taxon>
        <taxon>Pseudomonadota</taxon>
        <taxon>Gammaproteobacteria</taxon>
        <taxon>Pseudomonadales</taxon>
        <taxon>Pseudomonadaceae</taxon>
        <taxon>Pseudomonas</taxon>
    </lineage>
</organism>
<protein>
    <recommendedName>
        <fullName>Probable periplasmic serine endoprotease DegP-like</fullName>
        <ecNumber>3.4.21.107</ecNumber>
    </recommendedName>
    <alternativeName>
        <fullName>Protease Do</fullName>
    </alternativeName>
</protein>
<sequence length="477" mass="50961">MSIPRLKSYLMMFAAVLMLGQVLTAQAEEALPDFTTLVEQASPAVVNISTKQKLPDRRIAAGQMPDLEGLPPMFREFFERNMPQQPRSPRGDRQREAQSLGSGFIISSDGYVLTNNHVVADADEIIVRLSDRSELQAKLVGTDPRTDVALLKVDGKNLPTVKLGDSEKLKVGEWVLAIGSPFGFDHSVTKGIVSAKGRTLPNDTYVPFIQTDVAINPGNSGGPLFNMKGEVVGINSQIFTRSGGFMGLSFAIPIDVAIDVSNQLKKDGKVSRGWLGVVIQEVNKDLAESFGLDKPAGALVAQVLENGPAAKGGLQVGDVILSMNGQPIVMSADLPHLVGGLKDGEKAKLEIIRNGKRQNLDISVGALPDDDVEIGAGTEGGAERSSNRLGVSVADLTAEQKKSLELKGGVVIKEVQDGPAAMIGLRPGDVISHLNNQAIGSAKEFTEIAKELPKNRSVSMRVLRQGRASFITFKLAE</sequence>
<keyword id="KW-0378">Hydrolase</keyword>
<keyword id="KW-0574">Periplasm</keyword>
<keyword id="KW-0645">Protease</keyword>
<keyword id="KW-0677">Repeat</keyword>
<keyword id="KW-0720">Serine protease</keyword>
<keyword id="KW-0732">Signal</keyword>
<keyword id="KW-0346">Stress response</keyword>
<gene>
    <name type="ordered locus">Pput_4291</name>
</gene>
<evidence type="ECO:0000250" key="1"/>
<evidence type="ECO:0000255" key="2"/>
<evidence type="ECO:0000255" key="3">
    <source>
        <dbReference type="PROSITE-ProRule" id="PRU00143"/>
    </source>
</evidence>
<evidence type="ECO:0000305" key="4"/>
<comment type="function">
    <text evidence="1">Might be efficient in the degradation of transiently denatured and unfolded proteins which accumulate in the periplasm following stress conditions.</text>
</comment>
<comment type="catalytic activity">
    <reaction>
        <text>Acts on substrates that are at least partially unfolded. The cleavage site P1 residue is normally between a pair of hydrophobic residues, such as Val-|-Val.</text>
        <dbReference type="EC" id="3.4.21.107"/>
    </reaction>
</comment>
<comment type="subcellular location">
    <subcellularLocation>
        <location evidence="4">Periplasm</location>
    </subcellularLocation>
</comment>
<comment type="similarity">
    <text evidence="4">Belongs to the peptidase S1C family.</text>
</comment>
<reference key="1">
    <citation type="submission" date="2007-05" db="EMBL/GenBank/DDBJ databases">
        <title>Complete sequence of Pseudomonas putida F1.</title>
        <authorList>
            <consortium name="US DOE Joint Genome Institute"/>
            <person name="Copeland A."/>
            <person name="Lucas S."/>
            <person name="Lapidus A."/>
            <person name="Barry K."/>
            <person name="Detter J.C."/>
            <person name="Glavina del Rio T."/>
            <person name="Hammon N."/>
            <person name="Israni S."/>
            <person name="Dalin E."/>
            <person name="Tice H."/>
            <person name="Pitluck S."/>
            <person name="Chain P."/>
            <person name="Malfatti S."/>
            <person name="Shin M."/>
            <person name="Vergez L."/>
            <person name="Schmutz J."/>
            <person name="Larimer F."/>
            <person name="Land M."/>
            <person name="Hauser L."/>
            <person name="Kyrpides N."/>
            <person name="Lykidis A."/>
            <person name="Parales R."/>
            <person name="Richardson P."/>
        </authorList>
    </citation>
    <scope>NUCLEOTIDE SEQUENCE [LARGE SCALE GENOMIC DNA]</scope>
    <source>
        <strain>ATCC 700007 / DSM 6899 / JCM 31910 / BCRC 17059 / LMG 24140 / F1</strain>
    </source>
</reference>